<comment type="function">
    <text evidence="1">Cleaves peptides in various proteins in a process that requires ATP hydrolysis. Has a chymotrypsin-like activity. Plays a major role in the degradation of misfolded proteins.</text>
</comment>
<comment type="catalytic activity">
    <reaction evidence="1">
        <text>Hydrolysis of proteins to small peptides in the presence of ATP and magnesium. alpha-casein is the usual test substrate. In the absence of ATP, only oligopeptides shorter than five residues are hydrolyzed (such as succinyl-Leu-Tyr-|-NHMec, and Leu-Tyr-Leu-|-Tyr-Trp, in which cleavage of the -Tyr-|-Leu- and -Tyr-|-Trp bonds also occurs).</text>
        <dbReference type="EC" id="3.4.21.92"/>
    </reaction>
</comment>
<comment type="subunit">
    <text evidence="1">Fourteen ClpP subunits assemble into 2 heptameric rings which stack back to back to give a disk-like structure with a central cavity, resembling the structure of eukaryotic proteasomes.</text>
</comment>
<comment type="subcellular location">
    <subcellularLocation>
        <location evidence="1">Cytoplasm</location>
    </subcellularLocation>
</comment>
<comment type="similarity">
    <text evidence="1">Belongs to the peptidase S14 family.</text>
</comment>
<gene>
    <name evidence="1" type="primary">clpP</name>
    <name type="ordered locus">Reut_A1380</name>
</gene>
<evidence type="ECO:0000255" key="1">
    <source>
        <dbReference type="HAMAP-Rule" id="MF_00444"/>
    </source>
</evidence>
<reference key="1">
    <citation type="journal article" date="2010" name="PLoS ONE">
        <title>The complete multipartite genome sequence of Cupriavidus necator JMP134, a versatile pollutant degrader.</title>
        <authorList>
            <person name="Lykidis A."/>
            <person name="Perez-Pantoja D."/>
            <person name="Ledger T."/>
            <person name="Mavromatis K."/>
            <person name="Anderson I.J."/>
            <person name="Ivanova N.N."/>
            <person name="Hooper S.D."/>
            <person name="Lapidus A."/>
            <person name="Lucas S."/>
            <person name="Gonzalez B."/>
            <person name="Kyrpides N.C."/>
        </authorList>
    </citation>
    <scope>NUCLEOTIDE SEQUENCE [LARGE SCALE GENOMIC DNA]</scope>
    <source>
        <strain>JMP134 / LMG 1197</strain>
    </source>
</reference>
<organism>
    <name type="scientific">Cupriavidus pinatubonensis (strain JMP 134 / LMG 1197)</name>
    <name type="common">Cupriavidus necator (strain JMP 134)</name>
    <dbReference type="NCBI Taxonomy" id="264198"/>
    <lineage>
        <taxon>Bacteria</taxon>
        <taxon>Pseudomonadati</taxon>
        <taxon>Pseudomonadota</taxon>
        <taxon>Betaproteobacteria</taxon>
        <taxon>Burkholderiales</taxon>
        <taxon>Burkholderiaceae</taxon>
        <taxon>Cupriavidus</taxon>
    </lineage>
</organism>
<dbReference type="EC" id="3.4.21.92" evidence="1"/>
<dbReference type="EMBL" id="CP000090">
    <property type="protein sequence ID" value="AAZ60750.1"/>
    <property type="molecule type" value="Genomic_DNA"/>
</dbReference>
<dbReference type="SMR" id="Q472D3"/>
<dbReference type="STRING" id="264198.Reut_A1380"/>
<dbReference type="MEROPS" id="S14.001"/>
<dbReference type="KEGG" id="reu:Reut_A1380"/>
<dbReference type="eggNOG" id="COG0740">
    <property type="taxonomic scope" value="Bacteria"/>
</dbReference>
<dbReference type="HOGENOM" id="CLU_058707_3_2_4"/>
<dbReference type="OrthoDB" id="9802800at2"/>
<dbReference type="GO" id="GO:0005737">
    <property type="term" value="C:cytoplasm"/>
    <property type="evidence" value="ECO:0007669"/>
    <property type="project" value="UniProtKB-SubCell"/>
</dbReference>
<dbReference type="GO" id="GO:0009368">
    <property type="term" value="C:endopeptidase Clp complex"/>
    <property type="evidence" value="ECO:0007669"/>
    <property type="project" value="TreeGrafter"/>
</dbReference>
<dbReference type="GO" id="GO:0004176">
    <property type="term" value="F:ATP-dependent peptidase activity"/>
    <property type="evidence" value="ECO:0007669"/>
    <property type="project" value="InterPro"/>
</dbReference>
<dbReference type="GO" id="GO:0051117">
    <property type="term" value="F:ATPase binding"/>
    <property type="evidence" value="ECO:0007669"/>
    <property type="project" value="TreeGrafter"/>
</dbReference>
<dbReference type="GO" id="GO:0004252">
    <property type="term" value="F:serine-type endopeptidase activity"/>
    <property type="evidence" value="ECO:0007669"/>
    <property type="project" value="UniProtKB-UniRule"/>
</dbReference>
<dbReference type="GO" id="GO:0006515">
    <property type="term" value="P:protein quality control for misfolded or incompletely synthesized proteins"/>
    <property type="evidence" value="ECO:0007669"/>
    <property type="project" value="TreeGrafter"/>
</dbReference>
<dbReference type="CDD" id="cd07017">
    <property type="entry name" value="S14_ClpP_2"/>
    <property type="match status" value="1"/>
</dbReference>
<dbReference type="FunFam" id="3.90.226.10:FF:000001">
    <property type="entry name" value="ATP-dependent Clp protease proteolytic subunit"/>
    <property type="match status" value="1"/>
</dbReference>
<dbReference type="Gene3D" id="3.90.226.10">
    <property type="entry name" value="2-enoyl-CoA Hydratase, Chain A, domain 1"/>
    <property type="match status" value="1"/>
</dbReference>
<dbReference type="HAMAP" id="MF_00444">
    <property type="entry name" value="ClpP"/>
    <property type="match status" value="1"/>
</dbReference>
<dbReference type="InterPro" id="IPR001907">
    <property type="entry name" value="ClpP"/>
</dbReference>
<dbReference type="InterPro" id="IPR029045">
    <property type="entry name" value="ClpP/crotonase-like_dom_sf"/>
</dbReference>
<dbReference type="InterPro" id="IPR023562">
    <property type="entry name" value="ClpP/TepA"/>
</dbReference>
<dbReference type="InterPro" id="IPR033135">
    <property type="entry name" value="ClpP_His_AS"/>
</dbReference>
<dbReference type="InterPro" id="IPR018215">
    <property type="entry name" value="ClpP_Ser_AS"/>
</dbReference>
<dbReference type="NCBIfam" id="TIGR00493">
    <property type="entry name" value="clpP"/>
    <property type="match status" value="1"/>
</dbReference>
<dbReference type="NCBIfam" id="NF001368">
    <property type="entry name" value="PRK00277.1"/>
    <property type="match status" value="1"/>
</dbReference>
<dbReference type="NCBIfam" id="NF009205">
    <property type="entry name" value="PRK12553.1"/>
    <property type="match status" value="1"/>
</dbReference>
<dbReference type="PANTHER" id="PTHR10381">
    <property type="entry name" value="ATP-DEPENDENT CLP PROTEASE PROTEOLYTIC SUBUNIT"/>
    <property type="match status" value="1"/>
</dbReference>
<dbReference type="PANTHER" id="PTHR10381:SF70">
    <property type="entry name" value="ATP-DEPENDENT CLP PROTEASE PROTEOLYTIC SUBUNIT"/>
    <property type="match status" value="1"/>
</dbReference>
<dbReference type="Pfam" id="PF00574">
    <property type="entry name" value="CLP_protease"/>
    <property type="match status" value="1"/>
</dbReference>
<dbReference type="PRINTS" id="PR00127">
    <property type="entry name" value="CLPPROTEASEP"/>
</dbReference>
<dbReference type="SUPFAM" id="SSF52096">
    <property type="entry name" value="ClpP/crotonase"/>
    <property type="match status" value="1"/>
</dbReference>
<dbReference type="PROSITE" id="PS00382">
    <property type="entry name" value="CLP_PROTEASE_HIS"/>
    <property type="match status" value="1"/>
</dbReference>
<dbReference type="PROSITE" id="PS00381">
    <property type="entry name" value="CLP_PROTEASE_SER"/>
    <property type="match status" value="1"/>
</dbReference>
<name>CLPP_CUPPJ</name>
<accession>Q472D3</accession>
<proteinExistence type="inferred from homology"/>
<protein>
    <recommendedName>
        <fullName evidence="1">ATP-dependent Clp protease proteolytic subunit</fullName>
        <ecNumber evidence="1">3.4.21.92</ecNumber>
    </recommendedName>
    <alternativeName>
        <fullName evidence="1">Endopeptidase Clp</fullName>
    </alternativeName>
</protein>
<feature type="chain" id="PRO_0000226464" description="ATP-dependent Clp protease proteolytic subunit">
    <location>
        <begin position="1"/>
        <end position="216"/>
    </location>
</feature>
<feature type="active site" description="Nucleophile" evidence="1">
    <location>
        <position position="120"/>
    </location>
</feature>
<feature type="active site" evidence="1">
    <location>
        <position position="145"/>
    </location>
</feature>
<keyword id="KW-0963">Cytoplasm</keyword>
<keyword id="KW-0378">Hydrolase</keyword>
<keyword id="KW-0645">Protease</keyword>
<keyword id="KW-0720">Serine protease</keyword>
<sequence length="216" mass="23534">MTRNDLLDRLATTQASALETQGLGLVPMVVEQSGRGERAYDIYSRLLKERVVFLVGEVNDQTANLVVAQLLFLESENPDKDISLYINSPGGSVSAGLAIYDTMQFVKPDVQTLCMGMAASMGAFLLAAGAKGKRSALPNSRIMIHQPLGGARGQASDIEIQAREILYLRERLNSILSEVTGQPVEKIARDTDRDNFMSGDQAVDYGLIDKVIARRS</sequence>